<dbReference type="EMBL" id="J03412">
    <property type="protein sequence ID" value="AAA83845.1"/>
    <property type="molecule type" value="Genomic_DNA"/>
</dbReference>
<dbReference type="EMBL" id="U00096">
    <property type="protein sequence ID" value="AAC73982.1"/>
    <property type="molecule type" value="Genomic_DNA"/>
</dbReference>
<dbReference type="EMBL" id="AP009048">
    <property type="protein sequence ID" value="BAA35628.1"/>
    <property type="molecule type" value="Genomic_DNA"/>
</dbReference>
<dbReference type="PIR" id="S03787">
    <property type="entry name" value="S03787"/>
</dbReference>
<dbReference type="RefSeq" id="NP_415416.1">
    <property type="nucleotide sequence ID" value="NC_000913.3"/>
</dbReference>
<dbReference type="RefSeq" id="WP_000534637.1">
    <property type="nucleotide sequence ID" value="NZ_STEB01000006.1"/>
</dbReference>
<dbReference type="SMR" id="P18777"/>
<dbReference type="BioGRID" id="4260727">
    <property type="interactions" value="5"/>
</dbReference>
<dbReference type="ComplexPortal" id="CPX-320">
    <property type="entry name" value="DmaABC DMSO reductase complex"/>
</dbReference>
<dbReference type="FunCoup" id="P18777">
    <property type="interactions" value="174"/>
</dbReference>
<dbReference type="IntAct" id="P18777">
    <property type="interactions" value="1"/>
</dbReference>
<dbReference type="STRING" id="511145.b0896"/>
<dbReference type="TCDB" id="5.A.3.3.2">
    <property type="family name" value="the prokaryotic molybdopterin-containing oxidoreductase (pmo) family"/>
</dbReference>
<dbReference type="jPOST" id="P18777"/>
<dbReference type="PaxDb" id="511145-b0896"/>
<dbReference type="EnsemblBacteria" id="AAC73982">
    <property type="protein sequence ID" value="AAC73982"/>
    <property type="gene ID" value="b0896"/>
</dbReference>
<dbReference type="GeneID" id="945502"/>
<dbReference type="KEGG" id="ecj:JW0879"/>
<dbReference type="KEGG" id="eco:b0896"/>
<dbReference type="KEGG" id="ecoc:C3026_05540"/>
<dbReference type="PATRIC" id="fig|1411691.4.peg.1381"/>
<dbReference type="EchoBASE" id="EB0230"/>
<dbReference type="eggNOG" id="COG3302">
    <property type="taxonomic scope" value="Bacteria"/>
</dbReference>
<dbReference type="HOGENOM" id="CLU_064909_2_0_6"/>
<dbReference type="InParanoid" id="P18777"/>
<dbReference type="OMA" id="MVRVYNT"/>
<dbReference type="OrthoDB" id="4394845at2"/>
<dbReference type="PhylomeDB" id="P18777"/>
<dbReference type="BioCyc" id="EcoCyc:DMSC-MONOMER"/>
<dbReference type="BioCyc" id="MetaCyc:DMSC-MONOMER"/>
<dbReference type="PRO" id="PR:P18777"/>
<dbReference type="Proteomes" id="UP000000625">
    <property type="component" value="Chromosome"/>
</dbReference>
<dbReference type="GO" id="GO:0009390">
    <property type="term" value="C:dimethyl sulfoxide reductase complex"/>
    <property type="evidence" value="ECO:0000314"/>
    <property type="project" value="EcoCyc"/>
</dbReference>
<dbReference type="GO" id="GO:0005886">
    <property type="term" value="C:plasma membrane"/>
    <property type="evidence" value="ECO:0000314"/>
    <property type="project" value="ComplexPortal"/>
</dbReference>
<dbReference type="GO" id="GO:0009389">
    <property type="term" value="F:dimethyl sulfoxide reductase activity"/>
    <property type="evidence" value="ECO:0000314"/>
    <property type="project" value="EcoCyc"/>
</dbReference>
<dbReference type="GO" id="GO:0019645">
    <property type="term" value="P:anaerobic electron transport chain"/>
    <property type="evidence" value="ECO:0000314"/>
    <property type="project" value="ComplexPortal"/>
</dbReference>
<dbReference type="GO" id="GO:0009061">
    <property type="term" value="P:anaerobic respiration"/>
    <property type="evidence" value="ECO:0000270"/>
    <property type="project" value="EcoCyc"/>
</dbReference>
<dbReference type="GO" id="GO:0018907">
    <property type="term" value="P:dimethyl sulfoxide metabolic process"/>
    <property type="evidence" value="ECO:0000314"/>
    <property type="project" value="ComplexPortal"/>
</dbReference>
<dbReference type="InterPro" id="IPR007059">
    <property type="entry name" value="DmsC"/>
</dbReference>
<dbReference type="PANTHER" id="PTHR38095:SF2">
    <property type="entry name" value="ANAEROBIC DIMETHYL SULFOXIDE REDUCTASE CHAIN C"/>
    <property type="match status" value="1"/>
</dbReference>
<dbReference type="PANTHER" id="PTHR38095">
    <property type="entry name" value="ANAEROBIC DIMETHYL SULFOXIDE REDUCTASE CHAIN YNFH"/>
    <property type="match status" value="1"/>
</dbReference>
<dbReference type="Pfam" id="PF04976">
    <property type="entry name" value="DmsC"/>
    <property type="match status" value="1"/>
</dbReference>
<organism>
    <name type="scientific">Escherichia coli (strain K12)</name>
    <dbReference type="NCBI Taxonomy" id="83333"/>
    <lineage>
        <taxon>Bacteria</taxon>
        <taxon>Pseudomonadati</taxon>
        <taxon>Pseudomonadota</taxon>
        <taxon>Gammaproteobacteria</taxon>
        <taxon>Enterobacterales</taxon>
        <taxon>Enterobacteriaceae</taxon>
        <taxon>Escherichia</taxon>
    </lineage>
</organism>
<comment type="function">
    <text>Terminal reductase during anaerobic growth on various sulfoxide and N-oxide compounds. DmsC anchors the DmsAB dimer to the membrane and stabilizes it.</text>
</comment>
<comment type="subunit">
    <text>Heterotrimeric enzyme composed of a catalytic heterodimer (DmsAB) and a membrane anchor protein (DmsC).</text>
</comment>
<comment type="subcellular location">
    <subcellularLocation>
        <location>Cell inner membrane</location>
        <topology>Multi-pass membrane protein</topology>
    </subcellularLocation>
</comment>
<comment type="similarity">
    <text evidence="1">Belongs to the DmsC family.</text>
</comment>
<sequence>MGSGWHEWPLMIFTVFGQCVAGGFIVLALALLKGDLRAEAQQRVIACMFGLWVLMGIGFIASMLHLGSPMRAFNSLNRVGASALSNEIASGSIFFAVGGIGWLLAMLKKLSPALRTLWLIVTMVLGVIFVWMMVRVYNSIDTVPTWYSIWTPMGFFLTMFMGGPLLGYLLLSLAGVDGWAMRLLPAISVLALVVSGVVSVMQGAELATIHSSVQQAAALVPDYGALMSWRIVLLAVALCLWIAPQLKGYQPAVPLLSVSFILLLAGELIGRGVFYGLHMTVGMAVAS</sequence>
<feature type="chain" id="PRO_0000079947" description="Anaerobic dimethyl sulfoxide reductase chain C">
    <location>
        <begin position="1"/>
        <end position="287"/>
    </location>
</feature>
<feature type="topological domain" description="Periplasmic" evidence="1">
    <location>
        <begin position="1"/>
        <end position="9"/>
    </location>
</feature>
<feature type="transmembrane region" description="Helical" evidence="1">
    <location>
        <begin position="10"/>
        <end position="32"/>
    </location>
</feature>
<feature type="topological domain" description="Cytoplasmic" evidence="1">
    <location>
        <begin position="33"/>
        <end position="43"/>
    </location>
</feature>
<feature type="transmembrane region" description="Helical" evidence="1">
    <location>
        <begin position="44"/>
        <end position="66"/>
    </location>
</feature>
<feature type="topological domain" description="Periplasmic" evidence="1">
    <location>
        <begin position="67"/>
        <end position="89"/>
    </location>
</feature>
<feature type="transmembrane region" description="Helical" evidence="1">
    <location>
        <begin position="90"/>
        <end position="107"/>
    </location>
</feature>
<feature type="topological domain" description="Cytoplasmic" evidence="1">
    <location>
        <begin position="108"/>
        <end position="114"/>
    </location>
</feature>
<feature type="transmembrane region" description="Helical" evidence="1">
    <location>
        <begin position="115"/>
        <end position="134"/>
    </location>
</feature>
<feature type="topological domain" description="Periplasmic" evidence="1">
    <location>
        <begin position="135"/>
        <end position="156"/>
    </location>
</feature>
<feature type="transmembrane region" description="Helical" evidence="1">
    <location>
        <begin position="157"/>
        <end position="174"/>
    </location>
</feature>
<feature type="topological domain" description="Cytoplasmic" evidence="1">
    <location>
        <begin position="175"/>
        <end position="182"/>
    </location>
</feature>
<feature type="transmembrane region" description="Helical" evidence="1">
    <location>
        <begin position="183"/>
        <end position="201"/>
    </location>
</feature>
<feature type="topological domain" description="Periplasmic" evidence="1">
    <location>
        <begin position="202"/>
        <end position="224"/>
    </location>
</feature>
<feature type="transmembrane region" description="Helical" evidence="1">
    <location>
        <begin position="225"/>
        <end position="242"/>
    </location>
</feature>
<feature type="topological domain" description="Cytoplasmic" evidence="1">
    <location>
        <begin position="243"/>
        <end position="254"/>
    </location>
</feature>
<feature type="transmembrane region" description="Helical" evidence="1">
    <location>
        <begin position="255"/>
        <end position="280"/>
    </location>
</feature>
<feature type="topological domain" description="Periplasmic" evidence="1">
    <location>
        <begin position="281"/>
        <end position="287"/>
    </location>
</feature>
<name>DMSC_ECOLI</name>
<gene>
    <name type="primary">dmsC</name>
    <name type="ordered locus">b0896</name>
    <name type="ordered locus">JW0879</name>
</gene>
<accession>P18777</accession>
<protein>
    <recommendedName>
        <fullName>Anaerobic dimethyl sulfoxide reductase chain C</fullName>
    </recommendedName>
    <alternativeName>
        <fullName>DMSO reductase anchor subunit</fullName>
    </alternativeName>
</protein>
<proteinExistence type="evidence at protein level"/>
<reference key="1">
    <citation type="journal article" date="1988" name="Mol. Microbiol.">
        <title>Nucleotide sequence of the dmsABC operon encoding the anaerobic dimethylsulphoxide reductase of Escherichia coli.</title>
        <authorList>
            <person name="Bilous P.T."/>
            <person name="Cole S.T."/>
            <person name="Anderson W.F."/>
            <person name="Weiner J.H."/>
        </authorList>
    </citation>
    <scope>NUCLEOTIDE SEQUENCE [GENOMIC DNA]</scope>
    <source>
        <strain>K12 / C600 / CR34 / ATCC 23724 / DSM 3925 / LMG 3041 / NCIB 10222</strain>
    </source>
</reference>
<reference key="2">
    <citation type="journal article" date="1996" name="DNA Res.">
        <title>A 718-kb DNA sequence of the Escherichia coli K-12 genome corresponding to the 12.7-28.0 min region on the linkage map.</title>
        <authorList>
            <person name="Oshima T."/>
            <person name="Aiba H."/>
            <person name="Baba T."/>
            <person name="Fujita K."/>
            <person name="Hayashi K."/>
            <person name="Honjo A."/>
            <person name="Ikemoto K."/>
            <person name="Inada T."/>
            <person name="Itoh T."/>
            <person name="Kajihara M."/>
            <person name="Kanai K."/>
            <person name="Kashimoto K."/>
            <person name="Kimura S."/>
            <person name="Kitagawa M."/>
            <person name="Makino K."/>
            <person name="Masuda S."/>
            <person name="Miki T."/>
            <person name="Mizobuchi K."/>
            <person name="Mori H."/>
            <person name="Motomura K."/>
            <person name="Nakamura Y."/>
            <person name="Nashimoto H."/>
            <person name="Nishio Y."/>
            <person name="Saito N."/>
            <person name="Sampei G."/>
            <person name="Seki Y."/>
            <person name="Tagami H."/>
            <person name="Takemoto K."/>
            <person name="Wada C."/>
            <person name="Yamamoto Y."/>
            <person name="Yano M."/>
            <person name="Horiuchi T."/>
        </authorList>
    </citation>
    <scope>NUCLEOTIDE SEQUENCE [LARGE SCALE GENOMIC DNA]</scope>
    <source>
        <strain>K12 / W3110 / ATCC 27325 / DSM 5911</strain>
    </source>
</reference>
<reference key="3">
    <citation type="journal article" date="1997" name="Science">
        <title>The complete genome sequence of Escherichia coli K-12.</title>
        <authorList>
            <person name="Blattner F.R."/>
            <person name="Plunkett G. III"/>
            <person name="Bloch C.A."/>
            <person name="Perna N.T."/>
            <person name="Burland V."/>
            <person name="Riley M."/>
            <person name="Collado-Vides J."/>
            <person name="Glasner J.D."/>
            <person name="Rode C.K."/>
            <person name="Mayhew G.F."/>
            <person name="Gregor J."/>
            <person name="Davis N.W."/>
            <person name="Kirkpatrick H.A."/>
            <person name="Goeden M.A."/>
            <person name="Rose D.J."/>
            <person name="Mau B."/>
            <person name="Shao Y."/>
        </authorList>
    </citation>
    <scope>NUCLEOTIDE SEQUENCE [LARGE SCALE GENOMIC DNA]</scope>
    <source>
        <strain>K12 / MG1655 / ATCC 47076</strain>
    </source>
</reference>
<reference key="4">
    <citation type="journal article" date="2006" name="Mol. Syst. Biol.">
        <title>Highly accurate genome sequences of Escherichia coli K-12 strains MG1655 and W3110.</title>
        <authorList>
            <person name="Hayashi K."/>
            <person name="Morooka N."/>
            <person name="Yamamoto Y."/>
            <person name="Fujita K."/>
            <person name="Isono K."/>
            <person name="Choi S."/>
            <person name="Ohtsubo E."/>
            <person name="Baba T."/>
            <person name="Wanner B.L."/>
            <person name="Mori H."/>
            <person name="Horiuchi T."/>
        </authorList>
    </citation>
    <scope>NUCLEOTIDE SEQUENCE [LARGE SCALE GENOMIC DNA]</scope>
    <source>
        <strain>K12 / W3110 / ATCC 27325 / DSM 5911</strain>
    </source>
</reference>
<reference key="5">
    <citation type="journal article" date="1993" name="J. Biol. Chem.">
        <title>The topology of the anchor subunit of dimethyl sulfoxide reductase of Escherichia coli.</title>
        <authorList>
            <person name="Weiner J.H."/>
            <person name="Shaw G."/>
            <person name="Turner R.J."/>
            <person name="Trieber C.A."/>
        </authorList>
    </citation>
    <scope>TOPOLOGY</scope>
</reference>
<reference key="6">
    <citation type="journal article" date="1990" name="J. Bacteriol.">
        <title>Organization of dimethyl sulfoxide reductase in the plasma membrane of Escherichia coli.</title>
        <authorList>
            <person name="Sambasivarao D."/>
            <person name="Scraba D.G."/>
            <person name="Trieber C."/>
            <person name="Weiner J.H."/>
        </authorList>
    </citation>
    <scope>TOPOLOGY</scope>
</reference>
<reference key="7">
    <citation type="journal article" date="2005" name="Science">
        <title>Global topology analysis of the Escherichia coli inner membrane proteome.</title>
        <authorList>
            <person name="Daley D.O."/>
            <person name="Rapp M."/>
            <person name="Granseth E."/>
            <person name="Melen K."/>
            <person name="Drew D."/>
            <person name="von Heijne G."/>
        </authorList>
    </citation>
    <scope>TOPOLOGY [LARGE SCALE ANALYSIS]</scope>
    <source>
        <strain>K12 / MG1655 / ATCC 47076</strain>
    </source>
</reference>
<keyword id="KW-0997">Cell inner membrane</keyword>
<keyword id="KW-1003">Cell membrane</keyword>
<keyword id="KW-0472">Membrane</keyword>
<keyword id="KW-0560">Oxidoreductase</keyword>
<keyword id="KW-1185">Reference proteome</keyword>
<keyword id="KW-0812">Transmembrane</keyword>
<keyword id="KW-1133">Transmembrane helix</keyword>
<evidence type="ECO:0000305" key="1"/>